<reference key="1">
    <citation type="journal article" date="2004" name="Nucleic Acids Res.">
        <title>The genome sequence of Bacillus cereus ATCC 10987 reveals metabolic adaptations and a large plasmid related to Bacillus anthracis pXO1.</title>
        <authorList>
            <person name="Rasko D.A."/>
            <person name="Ravel J."/>
            <person name="Oekstad O.A."/>
            <person name="Helgason E."/>
            <person name="Cer R.Z."/>
            <person name="Jiang L."/>
            <person name="Shores K.A."/>
            <person name="Fouts D.E."/>
            <person name="Tourasse N.J."/>
            <person name="Angiuoli S.V."/>
            <person name="Kolonay J.F."/>
            <person name="Nelson W.C."/>
            <person name="Kolstoe A.-B."/>
            <person name="Fraser C.M."/>
            <person name="Read T.D."/>
        </authorList>
    </citation>
    <scope>NUCLEOTIDE SEQUENCE [LARGE SCALE GENOMIC DNA]</scope>
    <source>
        <strain>ATCC 10987 / NRS 248</strain>
    </source>
</reference>
<sequence>MTTQVVNVIGAGLAGSEAAYQIAKRGVQVRLYEMRPVRQTPAHHTDKFAELVCSNSLRANTLTNAVGVIKEEMRLMDSVIIRAADECSVPAGGALAVDRHEFAAKVTEYVKNHPNVTVVNEEITEIPEGPTVIATGPLTSPDLSAQLKELTGEDYFYFYDAAAPIVEKDSIDMNKVYLKSRYDKGEAAYLNCPMTEEEFDRFYEALIAAETVPLKEFEKEIFFEGCMPVEVMASRGRQTLVFGPMKPVGLEDPKTGKTPYAVVQLRQDDAAGTLYNIVGFQTHLKWGPQKEVLQLIPGLENAEIVRYGVMHRNTFINSPNLLRPTYQYKQRDDLFFAGQMTGVEGYVESAASGLLAGINAARLVKGEEPVVLPPVTAMGSMANYITATNAKNFQPMNANFGLFAPLEKKIKKKAERNEAYATRALETIRNFVNI</sequence>
<evidence type="ECO:0000255" key="1">
    <source>
        <dbReference type="HAMAP-Rule" id="MF_01037"/>
    </source>
</evidence>
<keyword id="KW-0963">Cytoplasm</keyword>
<keyword id="KW-0274">FAD</keyword>
<keyword id="KW-0285">Flavoprotein</keyword>
<keyword id="KW-0489">Methyltransferase</keyword>
<keyword id="KW-0520">NAD</keyword>
<keyword id="KW-0521">NADP</keyword>
<keyword id="KW-0808">Transferase</keyword>
<keyword id="KW-0819">tRNA processing</keyword>
<proteinExistence type="inferred from homology"/>
<accession>Q732N8</accession>
<comment type="function">
    <text evidence="1">Catalyzes the folate-dependent formation of 5-methyl-uridine at position 54 (M-5-U54) in all tRNAs.</text>
</comment>
<comment type="catalytic activity">
    <reaction evidence="1">
        <text>uridine(54) in tRNA + (6R)-5,10-methylene-5,6,7,8-tetrahydrofolate + NADH + H(+) = 5-methyluridine(54) in tRNA + (6S)-5,6,7,8-tetrahydrofolate + NAD(+)</text>
        <dbReference type="Rhea" id="RHEA:16873"/>
        <dbReference type="Rhea" id="RHEA-COMP:10167"/>
        <dbReference type="Rhea" id="RHEA-COMP:10193"/>
        <dbReference type="ChEBI" id="CHEBI:15378"/>
        <dbReference type="ChEBI" id="CHEBI:15636"/>
        <dbReference type="ChEBI" id="CHEBI:57453"/>
        <dbReference type="ChEBI" id="CHEBI:57540"/>
        <dbReference type="ChEBI" id="CHEBI:57945"/>
        <dbReference type="ChEBI" id="CHEBI:65315"/>
        <dbReference type="ChEBI" id="CHEBI:74447"/>
        <dbReference type="EC" id="2.1.1.74"/>
    </reaction>
</comment>
<comment type="catalytic activity">
    <reaction evidence="1">
        <text>uridine(54) in tRNA + (6R)-5,10-methylene-5,6,7,8-tetrahydrofolate + NADPH + H(+) = 5-methyluridine(54) in tRNA + (6S)-5,6,7,8-tetrahydrofolate + NADP(+)</text>
        <dbReference type="Rhea" id="RHEA:62372"/>
        <dbReference type="Rhea" id="RHEA-COMP:10167"/>
        <dbReference type="Rhea" id="RHEA-COMP:10193"/>
        <dbReference type="ChEBI" id="CHEBI:15378"/>
        <dbReference type="ChEBI" id="CHEBI:15636"/>
        <dbReference type="ChEBI" id="CHEBI:57453"/>
        <dbReference type="ChEBI" id="CHEBI:57783"/>
        <dbReference type="ChEBI" id="CHEBI:58349"/>
        <dbReference type="ChEBI" id="CHEBI:65315"/>
        <dbReference type="ChEBI" id="CHEBI:74447"/>
        <dbReference type="EC" id="2.1.1.74"/>
    </reaction>
</comment>
<comment type="cofactor">
    <cofactor evidence="1">
        <name>FAD</name>
        <dbReference type="ChEBI" id="CHEBI:57692"/>
    </cofactor>
</comment>
<comment type="subcellular location">
    <subcellularLocation>
        <location evidence="1">Cytoplasm</location>
    </subcellularLocation>
</comment>
<comment type="similarity">
    <text evidence="1">Belongs to the MnmG family. TrmFO subfamily.</text>
</comment>
<feature type="chain" id="PRO_0000117229" description="Methylenetetrahydrofolate--tRNA-(uracil-5-)-methyltransferase TrmFO">
    <location>
        <begin position="1"/>
        <end position="434"/>
    </location>
</feature>
<feature type="binding site" evidence="1">
    <location>
        <begin position="10"/>
        <end position="15"/>
    </location>
    <ligand>
        <name>FAD</name>
        <dbReference type="ChEBI" id="CHEBI:57692"/>
    </ligand>
</feature>
<protein>
    <recommendedName>
        <fullName evidence="1">Methylenetetrahydrofolate--tRNA-(uracil-5-)-methyltransferase TrmFO</fullName>
        <ecNumber evidence="1">2.1.1.74</ecNumber>
    </recommendedName>
    <alternativeName>
        <fullName evidence="1">Folate-dependent tRNA (uracil-5-)-methyltransferase</fullName>
    </alternativeName>
    <alternativeName>
        <fullName evidence="1">Folate-dependent tRNA(M-5-U54)-methyltransferase</fullName>
    </alternativeName>
</protein>
<dbReference type="EC" id="2.1.1.74" evidence="1"/>
<dbReference type="EMBL" id="AE017194">
    <property type="protein sequence ID" value="AAS42779.1"/>
    <property type="molecule type" value="Genomic_DNA"/>
</dbReference>
<dbReference type="SMR" id="Q732N8"/>
<dbReference type="KEGG" id="bca:BCE_3874"/>
<dbReference type="HOGENOM" id="CLU_033057_1_0_9"/>
<dbReference type="Proteomes" id="UP000002527">
    <property type="component" value="Chromosome"/>
</dbReference>
<dbReference type="GO" id="GO:0005829">
    <property type="term" value="C:cytosol"/>
    <property type="evidence" value="ECO:0007669"/>
    <property type="project" value="TreeGrafter"/>
</dbReference>
<dbReference type="GO" id="GO:0050660">
    <property type="term" value="F:flavin adenine dinucleotide binding"/>
    <property type="evidence" value="ECO:0007669"/>
    <property type="project" value="UniProtKB-UniRule"/>
</dbReference>
<dbReference type="GO" id="GO:0047151">
    <property type="term" value="F:tRNA (uracil(54)-C5)-methyltransferase activity, 5,10-methylenetetrahydrofolate-dependent"/>
    <property type="evidence" value="ECO:0007669"/>
    <property type="project" value="UniProtKB-UniRule"/>
</dbReference>
<dbReference type="GO" id="GO:0030488">
    <property type="term" value="P:tRNA methylation"/>
    <property type="evidence" value="ECO:0007669"/>
    <property type="project" value="TreeGrafter"/>
</dbReference>
<dbReference type="GO" id="GO:0002098">
    <property type="term" value="P:tRNA wobble uridine modification"/>
    <property type="evidence" value="ECO:0007669"/>
    <property type="project" value="TreeGrafter"/>
</dbReference>
<dbReference type="FunFam" id="3.50.50.60:FF:000035">
    <property type="entry name" value="Methylenetetrahydrofolate--tRNA-(uracil-5-)-methyltransferase TrmFO"/>
    <property type="match status" value="1"/>
</dbReference>
<dbReference type="FunFam" id="3.50.50.60:FF:000040">
    <property type="entry name" value="Methylenetetrahydrofolate--tRNA-(uracil-5-)-methyltransferase TrmFO"/>
    <property type="match status" value="1"/>
</dbReference>
<dbReference type="Gene3D" id="3.50.50.60">
    <property type="entry name" value="FAD/NAD(P)-binding domain"/>
    <property type="match status" value="2"/>
</dbReference>
<dbReference type="HAMAP" id="MF_01037">
    <property type="entry name" value="TrmFO"/>
    <property type="match status" value="1"/>
</dbReference>
<dbReference type="InterPro" id="IPR036188">
    <property type="entry name" value="FAD/NAD-bd_sf"/>
</dbReference>
<dbReference type="InterPro" id="IPR002218">
    <property type="entry name" value="MnmG-rel"/>
</dbReference>
<dbReference type="InterPro" id="IPR020595">
    <property type="entry name" value="MnmG-rel_CS"/>
</dbReference>
<dbReference type="InterPro" id="IPR040131">
    <property type="entry name" value="MnmG_N"/>
</dbReference>
<dbReference type="InterPro" id="IPR004417">
    <property type="entry name" value="TrmFO"/>
</dbReference>
<dbReference type="NCBIfam" id="TIGR00137">
    <property type="entry name" value="gid_trmFO"/>
    <property type="match status" value="1"/>
</dbReference>
<dbReference type="NCBIfam" id="NF003739">
    <property type="entry name" value="PRK05335.1"/>
    <property type="match status" value="1"/>
</dbReference>
<dbReference type="PANTHER" id="PTHR11806">
    <property type="entry name" value="GLUCOSE INHIBITED DIVISION PROTEIN A"/>
    <property type="match status" value="1"/>
</dbReference>
<dbReference type="PANTHER" id="PTHR11806:SF2">
    <property type="entry name" value="METHYLENETETRAHYDROFOLATE--TRNA-(URACIL-5-)-METHYLTRANSFERASE TRMFO"/>
    <property type="match status" value="1"/>
</dbReference>
<dbReference type="Pfam" id="PF01134">
    <property type="entry name" value="GIDA"/>
    <property type="match status" value="1"/>
</dbReference>
<dbReference type="SUPFAM" id="SSF51905">
    <property type="entry name" value="FAD/NAD(P)-binding domain"/>
    <property type="match status" value="1"/>
</dbReference>
<dbReference type="PROSITE" id="PS01281">
    <property type="entry name" value="GIDA_2"/>
    <property type="match status" value="1"/>
</dbReference>
<name>TRMFO_BACC1</name>
<organism>
    <name type="scientific">Bacillus cereus (strain ATCC 10987 / NRS 248)</name>
    <dbReference type="NCBI Taxonomy" id="222523"/>
    <lineage>
        <taxon>Bacteria</taxon>
        <taxon>Bacillati</taxon>
        <taxon>Bacillota</taxon>
        <taxon>Bacilli</taxon>
        <taxon>Bacillales</taxon>
        <taxon>Bacillaceae</taxon>
        <taxon>Bacillus</taxon>
        <taxon>Bacillus cereus group</taxon>
    </lineage>
</organism>
<gene>
    <name evidence="1" type="primary">trmFO</name>
    <name type="synonym">gid</name>
    <name type="ordered locus">BCE_3874</name>
</gene>